<gene>
    <name evidence="1" type="primary">rplA</name>
    <name type="ordered locus">SbBS512_E4472</name>
</gene>
<sequence length="234" mass="24730">MAKLTKRMRVIREKVDATKQYDINEAIALLKELATAKFVESVDVAVNLGIDARKSDQNVRGATVLPHGTGRSVRVAVFTQGANAEAAKAAGAELVGMEDLADQIKKGEMNFDVVIASPDAMRVVGQLGQVLGPRGLMPNPKVGTVTPNVAEAVKNAKAGQVRYRNDKNGIIHTTIGKVDFDADKLKENLEALLVALKKAKPTQAKGVYIKKVSISTTMGAGVAVDQAGLSASVN</sequence>
<reference key="1">
    <citation type="submission" date="2008-05" db="EMBL/GenBank/DDBJ databases">
        <title>Complete sequence of Shigella boydii serotype 18 strain BS512.</title>
        <authorList>
            <person name="Rasko D.A."/>
            <person name="Rosovitz M."/>
            <person name="Maurelli A.T."/>
            <person name="Myers G."/>
            <person name="Seshadri R."/>
            <person name="Cer R."/>
            <person name="Jiang L."/>
            <person name="Ravel J."/>
            <person name="Sebastian Y."/>
        </authorList>
    </citation>
    <scope>NUCLEOTIDE SEQUENCE [LARGE SCALE GENOMIC DNA]</scope>
    <source>
        <strain>CDC 3083-94 / BS512</strain>
    </source>
</reference>
<dbReference type="EMBL" id="CP001063">
    <property type="protein sequence ID" value="ACD07020.1"/>
    <property type="molecule type" value="Genomic_DNA"/>
</dbReference>
<dbReference type="RefSeq" id="WP_001096684.1">
    <property type="nucleotide sequence ID" value="NC_010658.1"/>
</dbReference>
<dbReference type="SMR" id="B2TWH0"/>
<dbReference type="STRING" id="344609.SbBS512_E4472"/>
<dbReference type="GeneID" id="93777910"/>
<dbReference type="KEGG" id="sbc:SbBS512_E4472"/>
<dbReference type="HOGENOM" id="CLU_062853_0_0_6"/>
<dbReference type="Proteomes" id="UP000001030">
    <property type="component" value="Chromosome"/>
</dbReference>
<dbReference type="GO" id="GO:0022625">
    <property type="term" value="C:cytosolic large ribosomal subunit"/>
    <property type="evidence" value="ECO:0007669"/>
    <property type="project" value="TreeGrafter"/>
</dbReference>
<dbReference type="GO" id="GO:0019843">
    <property type="term" value="F:rRNA binding"/>
    <property type="evidence" value="ECO:0007669"/>
    <property type="project" value="UniProtKB-UniRule"/>
</dbReference>
<dbReference type="GO" id="GO:0003735">
    <property type="term" value="F:structural constituent of ribosome"/>
    <property type="evidence" value="ECO:0007669"/>
    <property type="project" value="InterPro"/>
</dbReference>
<dbReference type="GO" id="GO:0000049">
    <property type="term" value="F:tRNA binding"/>
    <property type="evidence" value="ECO:0007669"/>
    <property type="project" value="UniProtKB-KW"/>
</dbReference>
<dbReference type="GO" id="GO:0006417">
    <property type="term" value="P:regulation of translation"/>
    <property type="evidence" value="ECO:0007669"/>
    <property type="project" value="UniProtKB-KW"/>
</dbReference>
<dbReference type="GO" id="GO:0006412">
    <property type="term" value="P:translation"/>
    <property type="evidence" value="ECO:0007669"/>
    <property type="project" value="UniProtKB-UniRule"/>
</dbReference>
<dbReference type="CDD" id="cd00403">
    <property type="entry name" value="Ribosomal_L1"/>
    <property type="match status" value="1"/>
</dbReference>
<dbReference type="FunFam" id="3.40.50.790:FF:000001">
    <property type="entry name" value="50S ribosomal protein L1"/>
    <property type="match status" value="1"/>
</dbReference>
<dbReference type="Gene3D" id="3.30.190.20">
    <property type="match status" value="1"/>
</dbReference>
<dbReference type="Gene3D" id="3.40.50.790">
    <property type="match status" value="1"/>
</dbReference>
<dbReference type="HAMAP" id="MF_01318_B">
    <property type="entry name" value="Ribosomal_uL1_B"/>
    <property type="match status" value="1"/>
</dbReference>
<dbReference type="InterPro" id="IPR005878">
    <property type="entry name" value="Ribosom_uL1_bac-type"/>
</dbReference>
<dbReference type="InterPro" id="IPR002143">
    <property type="entry name" value="Ribosomal_uL1"/>
</dbReference>
<dbReference type="InterPro" id="IPR023674">
    <property type="entry name" value="Ribosomal_uL1-like"/>
</dbReference>
<dbReference type="InterPro" id="IPR028364">
    <property type="entry name" value="Ribosomal_uL1/biogenesis"/>
</dbReference>
<dbReference type="InterPro" id="IPR016095">
    <property type="entry name" value="Ribosomal_uL1_3-a/b-sand"/>
</dbReference>
<dbReference type="InterPro" id="IPR023673">
    <property type="entry name" value="Ribosomal_uL1_CS"/>
</dbReference>
<dbReference type="NCBIfam" id="TIGR01169">
    <property type="entry name" value="rplA_bact"/>
    <property type="match status" value="1"/>
</dbReference>
<dbReference type="PANTHER" id="PTHR36427">
    <property type="entry name" value="54S RIBOSOMAL PROTEIN L1, MITOCHONDRIAL"/>
    <property type="match status" value="1"/>
</dbReference>
<dbReference type="PANTHER" id="PTHR36427:SF3">
    <property type="entry name" value="LARGE RIBOSOMAL SUBUNIT PROTEIN UL1M"/>
    <property type="match status" value="1"/>
</dbReference>
<dbReference type="Pfam" id="PF00687">
    <property type="entry name" value="Ribosomal_L1"/>
    <property type="match status" value="1"/>
</dbReference>
<dbReference type="PIRSF" id="PIRSF002155">
    <property type="entry name" value="Ribosomal_L1"/>
    <property type="match status" value="1"/>
</dbReference>
<dbReference type="SUPFAM" id="SSF56808">
    <property type="entry name" value="Ribosomal protein L1"/>
    <property type="match status" value="1"/>
</dbReference>
<dbReference type="PROSITE" id="PS01199">
    <property type="entry name" value="RIBOSOMAL_L1"/>
    <property type="match status" value="1"/>
</dbReference>
<evidence type="ECO:0000255" key="1">
    <source>
        <dbReference type="HAMAP-Rule" id="MF_01318"/>
    </source>
</evidence>
<evidence type="ECO:0000305" key="2"/>
<name>RL1_SHIB3</name>
<protein>
    <recommendedName>
        <fullName evidence="1">Large ribosomal subunit protein uL1</fullName>
    </recommendedName>
    <alternativeName>
        <fullName evidence="2">50S ribosomal protein L1</fullName>
    </alternativeName>
</protein>
<feature type="chain" id="PRO_1000141462" description="Large ribosomal subunit protein uL1">
    <location>
        <begin position="1"/>
        <end position="234"/>
    </location>
</feature>
<proteinExistence type="inferred from homology"/>
<keyword id="KW-1185">Reference proteome</keyword>
<keyword id="KW-0678">Repressor</keyword>
<keyword id="KW-0687">Ribonucleoprotein</keyword>
<keyword id="KW-0689">Ribosomal protein</keyword>
<keyword id="KW-0694">RNA-binding</keyword>
<keyword id="KW-0699">rRNA-binding</keyword>
<keyword id="KW-0810">Translation regulation</keyword>
<keyword id="KW-0820">tRNA-binding</keyword>
<accession>B2TWH0</accession>
<comment type="function">
    <text evidence="1">Binds directly to 23S rRNA. The L1 stalk is quite mobile in the ribosome, and is involved in E site tRNA release.</text>
</comment>
<comment type="function">
    <text evidence="1">Protein L1 is also a translational repressor protein, it controls the translation of the L11 operon by binding to its mRNA.</text>
</comment>
<comment type="subunit">
    <text evidence="1">Part of the 50S ribosomal subunit.</text>
</comment>
<comment type="similarity">
    <text evidence="1">Belongs to the universal ribosomal protein uL1 family.</text>
</comment>
<organism>
    <name type="scientific">Shigella boydii serotype 18 (strain CDC 3083-94 / BS512)</name>
    <dbReference type="NCBI Taxonomy" id="344609"/>
    <lineage>
        <taxon>Bacteria</taxon>
        <taxon>Pseudomonadati</taxon>
        <taxon>Pseudomonadota</taxon>
        <taxon>Gammaproteobacteria</taxon>
        <taxon>Enterobacterales</taxon>
        <taxon>Enterobacteriaceae</taxon>
        <taxon>Shigella</taxon>
    </lineage>
</organism>